<proteinExistence type="inferred from homology"/>
<evidence type="ECO:0000250" key="1"/>
<evidence type="ECO:0000255" key="2">
    <source>
        <dbReference type="PROSITE-ProRule" id="PRU00182"/>
    </source>
</evidence>
<evidence type="ECO:0000256" key="3">
    <source>
        <dbReference type="SAM" id="MobiDB-lite"/>
    </source>
</evidence>
<evidence type="ECO:0000305" key="4"/>
<feature type="chain" id="PRO_0000162758" description="Uncharacterized protein K07E8.7">
    <location>
        <begin position="1"/>
        <end position="432"/>
    </location>
</feature>
<feature type="domain" description="S4 RNA-binding" evidence="2">
    <location>
        <begin position="85"/>
        <end position="148"/>
    </location>
</feature>
<feature type="region of interest" description="Disordered" evidence="3">
    <location>
        <begin position="1"/>
        <end position="42"/>
    </location>
</feature>
<feature type="compositionally biased region" description="Polar residues" evidence="3">
    <location>
        <begin position="1"/>
        <end position="14"/>
    </location>
</feature>
<feature type="compositionally biased region" description="Basic and acidic residues" evidence="3">
    <location>
        <begin position="18"/>
        <end position="30"/>
    </location>
</feature>
<feature type="active site" evidence="1">
    <location>
        <position position="199"/>
    </location>
</feature>
<accession>O16686</accession>
<reference key="1">
    <citation type="journal article" date="1998" name="Science">
        <title>Genome sequence of the nematode C. elegans: a platform for investigating biology.</title>
        <authorList>
            <consortium name="The C. elegans sequencing consortium"/>
        </authorList>
    </citation>
    <scope>NUCLEOTIDE SEQUENCE [LARGE SCALE GENOMIC DNA]</scope>
    <source>
        <strain>Bristol N2</strain>
    </source>
</reference>
<gene>
    <name type="ORF">K07E8.7</name>
</gene>
<dbReference type="EMBL" id="FO081602">
    <property type="protein sequence ID" value="CCD72759.1"/>
    <property type="molecule type" value="Genomic_DNA"/>
</dbReference>
<dbReference type="PIR" id="T32044">
    <property type="entry name" value="T32044"/>
</dbReference>
<dbReference type="RefSeq" id="NP_493778.1">
    <property type="nucleotide sequence ID" value="NM_061377.6"/>
</dbReference>
<dbReference type="SMR" id="O16686"/>
<dbReference type="FunCoup" id="O16686">
    <property type="interactions" value="2262"/>
</dbReference>
<dbReference type="STRING" id="6239.K07E8.7a.1"/>
<dbReference type="PaxDb" id="6239-K07E8.7"/>
<dbReference type="PeptideAtlas" id="O16686"/>
<dbReference type="EnsemblMetazoa" id="K07E8.7a.1">
    <property type="protein sequence ID" value="K07E8.7a.1"/>
    <property type="gene ID" value="WBGene00019498"/>
</dbReference>
<dbReference type="GeneID" id="173456"/>
<dbReference type="KEGG" id="cel:CELE_K07E8.7"/>
<dbReference type="UCSC" id="K07E8.7">
    <property type="organism name" value="c. elegans"/>
</dbReference>
<dbReference type="AGR" id="WB:WBGene00019498"/>
<dbReference type="CTD" id="173456"/>
<dbReference type="WormBase" id="K07E8.7a">
    <property type="protein sequence ID" value="CE11898"/>
    <property type="gene ID" value="WBGene00019498"/>
</dbReference>
<dbReference type="eggNOG" id="KOG1919">
    <property type="taxonomic scope" value="Eukaryota"/>
</dbReference>
<dbReference type="GeneTree" id="ENSGT00420000029802"/>
<dbReference type="HOGENOM" id="CLU_016902_12_5_1"/>
<dbReference type="InParanoid" id="O16686"/>
<dbReference type="OMA" id="QTYCKGR"/>
<dbReference type="OrthoDB" id="424794at2759"/>
<dbReference type="PhylomeDB" id="O16686"/>
<dbReference type="PRO" id="PR:O16686"/>
<dbReference type="Proteomes" id="UP000001940">
    <property type="component" value="Chromosome II"/>
</dbReference>
<dbReference type="Bgee" id="WBGene00019498">
    <property type="expression patterns" value="Expressed in germ line (C elegans) and 4 other cell types or tissues"/>
</dbReference>
<dbReference type="ExpressionAtlas" id="O16686">
    <property type="expression patterns" value="baseline"/>
</dbReference>
<dbReference type="GO" id="GO:0009982">
    <property type="term" value="F:pseudouridine synthase activity"/>
    <property type="evidence" value="ECO:0000318"/>
    <property type="project" value="GO_Central"/>
</dbReference>
<dbReference type="GO" id="GO:0003723">
    <property type="term" value="F:RNA binding"/>
    <property type="evidence" value="ECO:0007669"/>
    <property type="project" value="UniProtKB-KW"/>
</dbReference>
<dbReference type="GO" id="GO:0000455">
    <property type="term" value="P:enzyme-directed rRNA pseudouridine synthesis"/>
    <property type="evidence" value="ECO:0000318"/>
    <property type="project" value="GO_Central"/>
</dbReference>
<dbReference type="CDD" id="cd02557">
    <property type="entry name" value="PseudoU_synth_ScRIB2"/>
    <property type="match status" value="1"/>
</dbReference>
<dbReference type="CDD" id="cd00165">
    <property type="entry name" value="S4"/>
    <property type="match status" value="1"/>
</dbReference>
<dbReference type="FunFam" id="3.30.2350.10:FF:000033">
    <property type="entry name" value="Pseudouridine synthase"/>
    <property type="match status" value="1"/>
</dbReference>
<dbReference type="Gene3D" id="3.30.2350.10">
    <property type="entry name" value="Pseudouridine synthase"/>
    <property type="match status" value="1"/>
</dbReference>
<dbReference type="InterPro" id="IPR020103">
    <property type="entry name" value="PsdUridine_synth_cat_dom_sf"/>
</dbReference>
<dbReference type="InterPro" id="IPR006224">
    <property type="entry name" value="PsdUridine_synth_RluA-like_CS"/>
</dbReference>
<dbReference type="InterPro" id="IPR006225">
    <property type="entry name" value="PsdUridine_synth_RluC/D"/>
</dbReference>
<dbReference type="InterPro" id="IPR006145">
    <property type="entry name" value="PsdUridine_synth_RsuA/RluA"/>
</dbReference>
<dbReference type="InterPro" id="IPR050188">
    <property type="entry name" value="RluA_PseudoU_synthase"/>
</dbReference>
<dbReference type="NCBIfam" id="TIGR00005">
    <property type="entry name" value="rluA_subfam"/>
    <property type="match status" value="1"/>
</dbReference>
<dbReference type="PANTHER" id="PTHR21600">
    <property type="entry name" value="MITOCHONDRIAL RNA PSEUDOURIDINE SYNTHASE"/>
    <property type="match status" value="1"/>
</dbReference>
<dbReference type="PANTHER" id="PTHR21600:SF40">
    <property type="entry name" value="PSEUDOURIDYLATE SYNTHASE RPUSD2"/>
    <property type="match status" value="1"/>
</dbReference>
<dbReference type="Pfam" id="PF00849">
    <property type="entry name" value="PseudoU_synth_2"/>
    <property type="match status" value="1"/>
</dbReference>
<dbReference type="SUPFAM" id="SSF55120">
    <property type="entry name" value="Pseudouridine synthase"/>
    <property type="match status" value="1"/>
</dbReference>
<dbReference type="PROSITE" id="PS01129">
    <property type="entry name" value="PSI_RLU"/>
    <property type="match status" value="1"/>
</dbReference>
<dbReference type="PROSITE" id="PS50889">
    <property type="entry name" value="S4"/>
    <property type="match status" value="1"/>
</dbReference>
<sequence length="432" mass="50011">MSDTTDVPENQKSPKPSGKADKRKIEEKPENSSLKRKKFEDPNKKVDPLEELPMKVPFKIVDGVRHLAPYWACYRTRTKGRWIGRKMVEVFSGEFLSTNRNYAKIACKMGRIYVNGEQMTDVDYVMRNGDRVEHWAHRHEHPIRDLPIRVISETDDLFVVEKPPSLPVHTCGQYAIHTVLGQLRVNEGRTGLRVLHRLDRATSGVLLFAKNYETDLEFKTTLKQGEWSKEYICKVDGVFPDEEQVCEQPIGPLVISMGIQCVRPDGKDAKSRFRKLWSDGTQSVVQVHIETGRTHQIRVHSQFLGHPIAGDQIYNSAVWGPTKGKNADYQKSFDELCEDVRNTHKCENWHEKPNPEFEQRMEHLAADTTPITPEAPSLTLEQRPEFDEICQKCNVESKKVPENHFQLYLHCLKYETKKWSFKTEMPDWAVQK</sequence>
<name>YK27_CAEEL</name>
<comment type="similarity">
    <text evidence="4">Belongs to the pseudouridine synthase RluA family.</text>
</comment>
<organism>
    <name type="scientific">Caenorhabditis elegans</name>
    <dbReference type="NCBI Taxonomy" id="6239"/>
    <lineage>
        <taxon>Eukaryota</taxon>
        <taxon>Metazoa</taxon>
        <taxon>Ecdysozoa</taxon>
        <taxon>Nematoda</taxon>
        <taxon>Chromadorea</taxon>
        <taxon>Rhabditida</taxon>
        <taxon>Rhabditina</taxon>
        <taxon>Rhabditomorpha</taxon>
        <taxon>Rhabditoidea</taxon>
        <taxon>Rhabditidae</taxon>
        <taxon>Peloderinae</taxon>
        <taxon>Caenorhabditis</taxon>
    </lineage>
</organism>
<keyword id="KW-1185">Reference proteome</keyword>
<keyword id="KW-0694">RNA-binding</keyword>
<protein>
    <recommendedName>
        <fullName>Uncharacterized protein K07E8.7</fullName>
    </recommendedName>
</protein>